<gene>
    <name evidence="1" type="primary">rsmH</name>
    <name type="synonym">mraW</name>
    <name type="ordered locus">BT_3455</name>
</gene>
<organism>
    <name type="scientific">Bacteroides thetaiotaomicron (strain ATCC 29148 / DSM 2079 / JCM 5827 / CCUG 10774 / NCTC 10582 / VPI-5482 / E50)</name>
    <dbReference type="NCBI Taxonomy" id="226186"/>
    <lineage>
        <taxon>Bacteria</taxon>
        <taxon>Pseudomonadati</taxon>
        <taxon>Bacteroidota</taxon>
        <taxon>Bacteroidia</taxon>
        <taxon>Bacteroidales</taxon>
        <taxon>Bacteroidaceae</taxon>
        <taxon>Bacteroides</taxon>
    </lineage>
</organism>
<protein>
    <recommendedName>
        <fullName evidence="1">Ribosomal RNA small subunit methyltransferase H</fullName>
        <ecNumber evidence="1">2.1.1.199</ecNumber>
    </recommendedName>
    <alternativeName>
        <fullName evidence="1">16S rRNA m(4)C1402 methyltransferase</fullName>
    </alternativeName>
    <alternativeName>
        <fullName evidence="1">rRNA (cytosine-N(4)-)-methyltransferase RsmH</fullName>
    </alternativeName>
</protein>
<keyword id="KW-0963">Cytoplasm</keyword>
<keyword id="KW-0489">Methyltransferase</keyword>
<keyword id="KW-1185">Reference proteome</keyword>
<keyword id="KW-0698">rRNA processing</keyword>
<keyword id="KW-0949">S-adenosyl-L-methionine</keyword>
<keyword id="KW-0808">Transferase</keyword>
<feature type="chain" id="PRO_0000108579" description="Ribosomal RNA small subunit methyltransferase H">
    <location>
        <begin position="1"/>
        <end position="304"/>
    </location>
</feature>
<feature type="binding site" evidence="1">
    <location>
        <begin position="37"/>
        <end position="39"/>
    </location>
    <ligand>
        <name>S-adenosyl-L-methionine</name>
        <dbReference type="ChEBI" id="CHEBI:59789"/>
    </ligand>
</feature>
<feature type="binding site" evidence="1">
    <location>
        <position position="57"/>
    </location>
    <ligand>
        <name>S-adenosyl-L-methionine</name>
        <dbReference type="ChEBI" id="CHEBI:59789"/>
    </ligand>
</feature>
<feature type="binding site" evidence="1">
    <location>
        <position position="79"/>
    </location>
    <ligand>
        <name>S-adenosyl-L-methionine</name>
        <dbReference type="ChEBI" id="CHEBI:59789"/>
    </ligand>
</feature>
<feature type="binding site" evidence="1">
    <location>
        <position position="100"/>
    </location>
    <ligand>
        <name>S-adenosyl-L-methionine</name>
        <dbReference type="ChEBI" id="CHEBI:59789"/>
    </ligand>
</feature>
<feature type="binding site" evidence="1">
    <location>
        <position position="107"/>
    </location>
    <ligand>
        <name>S-adenosyl-L-methionine</name>
        <dbReference type="ChEBI" id="CHEBI:59789"/>
    </ligand>
</feature>
<evidence type="ECO:0000255" key="1">
    <source>
        <dbReference type="HAMAP-Rule" id="MF_01007"/>
    </source>
</evidence>
<proteinExistence type="inferred from homology"/>
<sequence>MEKDELTYHVPVLLKESVDGMNIHPDGTYVDVTFGGAGHSREILSRLGEGGRLLGFDQDEDAERNIVNDPHFTFVRSNFRYLQNFLRYHDIEQVDAILADLGVSSHHFDDSERGFSFRFDGALDMRMNKRAGLTAADIVNTYEEERLANIFYLYGELKNSRKLASAIVKARNGQSIRTIGEFLEIIKPLFGREREKKELAKVFQALRIEVNQEMEALKEMLAAATEALKPGGRLVVITYHSLEDRMVKNIMKTGNVEGKAETDFFGNLQTPFRLVNNKVIVPDEAEIERNPRSRSAKLRIAEKK</sequence>
<accession>Q8A251</accession>
<comment type="function">
    <text evidence="1">Specifically methylates the N4 position of cytidine in position 1402 (C1402) of 16S rRNA.</text>
</comment>
<comment type="catalytic activity">
    <reaction evidence="1">
        <text>cytidine(1402) in 16S rRNA + S-adenosyl-L-methionine = N(4)-methylcytidine(1402) in 16S rRNA + S-adenosyl-L-homocysteine + H(+)</text>
        <dbReference type="Rhea" id="RHEA:42928"/>
        <dbReference type="Rhea" id="RHEA-COMP:10286"/>
        <dbReference type="Rhea" id="RHEA-COMP:10287"/>
        <dbReference type="ChEBI" id="CHEBI:15378"/>
        <dbReference type="ChEBI" id="CHEBI:57856"/>
        <dbReference type="ChEBI" id="CHEBI:59789"/>
        <dbReference type="ChEBI" id="CHEBI:74506"/>
        <dbReference type="ChEBI" id="CHEBI:82748"/>
        <dbReference type="EC" id="2.1.1.199"/>
    </reaction>
</comment>
<comment type="subcellular location">
    <subcellularLocation>
        <location evidence="1">Cytoplasm</location>
    </subcellularLocation>
</comment>
<comment type="similarity">
    <text evidence="1">Belongs to the methyltransferase superfamily. RsmH family.</text>
</comment>
<name>RSMH_BACTN</name>
<dbReference type="EC" id="2.1.1.199" evidence="1"/>
<dbReference type="EMBL" id="AE015928">
    <property type="protein sequence ID" value="AAO78561.1"/>
    <property type="molecule type" value="Genomic_DNA"/>
</dbReference>
<dbReference type="RefSeq" id="NP_812367.1">
    <property type="nucleotide sequence ID" value="NC_004663.1"/>
</dbReference>
<dbReference type="RefSeq" id="WP_008763720.1">
    <property type="nucleotide sequence ID" value="NZ_UYXG01000003.1"/>
</dbReference>
<dbReference type="SMR" id="Q8A251"/>
<dbReference type="FunCoup" id="Q8A251">
    <property type="interactions" value="543"/>
</dbReference>
<dbReference type="STRING" id="226186.BT_3455"/>
<dbReference type="PaxDb" id="226186-BT_3455"/>
<dbReference type="EnsemblBacteria" id="AAO78561">
    <property type="protein sequence ID" value="AAO78561"/>
    <property type="gene ID" value="BT_3455"/>
</dbReference>
<dbReference type="GeneID" id="60924636"/>
<dbReference type="KEGG" id="bth:BT_3455"/>
<dbReference type="PATRIC" id="fig|226186.12.peg.3522"/>
<dbReference type="eggNOG" id="COG0275">
    <property type="taxonomic scope" value="Bacteria"/>
</dbReference>
<dbReference type="HOGENOM" id="CLU_038422_2_0_10"/>
<dbReference type="InParanoid" id="Q8A251"/>
<dbReference type="OrthoDB" id="9806637at2"/>
<dbReference type="Proteomes" id="UP000001414">
    <property type="component" value="Chromosome"/>
</dbReference>
<dbReference type="GO" id="GO:0005737">
    <property type="term" value="C:cytoplasm"/>
    <property type="evidence" value="ECO:0000318"/>
    <property type="project" value="GO_Central"/>
</dbReference>
<dbReference type="GO" id="GO:0071424">
    <property type="term" value="F:rRNA (cytosine-N4-)-methyltransferase activity"/>
    <property type="evidence" value="ECO:0000318"/>
    <property type="project" value="GO_Central"/>
</dbReference>
<dbReference type="GO" id="GO:0070475">
    <property type="term" value="P:rRNA base methylation"/>
    <property type="evidence" value="ECO:0000318"/>
    <property type="project" value="GO_Central"/>
</dbReference>
<dbReference type="FunFam" id="1.10.150.170:FF:000003">
    <property type="entry name" value="Ribosomal RNA small subunit methyltransferase H"/>
    <property type="match status" value="1"/>
</dbReference>
<dbReference type="Gene3D" id="1.10.150.170">
    <property type="entry name" value="Putative methyltransferase TM0872, insert domain"/>
    <property type="match status" value="1"/>
</dbReference>
<dbReference type="Gene3D" id="3.40.50.150">
    <property type="entry name" value="Vaccinia Virus protein VP39"/>
    <property type="match status" value="1"/>
</dbReference>
<dbReference type="HAMAP" id="MF_01007">
    <property type="entry name" value="16SrRNA_methyltr_H"/>
    <property type="match status" value="1"/>
</dbReference>
<dbReference type="InterPro" id="IPR002903">
    <property type="entry name" value="RsmH"/>
</dbReference>
<dbReference type="InterPro" id="IPR023397">
    <property type="entry name" value="SAM-dep_MeTrfase_MraW_recog"/>
</dbReference>
<dbReference type="InterPro" id="IPR029063">
    <property type="entry name" value="SAM-dependent_MTases_sf"/>
</dbReference>
<dbReference type="NCBIfam" id="TIGR00006">
    <property type="entry name" value="16S rRNA (cytosine(1402)-N(4))-methyltransferase RsmH"/>
    <property type="match status" value="1"/>
</dbReference>
<dbReference type="PANTHER" id="PTHR11265:SF0">
    <property type="entry name" value="12S RRNA N4-METHYLCYTIDINE METHYLTRANSFERASE"/>
    <property type="match status" value="1"/>
</dbReference>
<dbReference type="PANTHER" id="PTHR11265">
    <property type="entry name" value="S-ADENOSYL-METHYLTRANSFERASE MRAW"/>
    <property type="match status" value="1"/>
</dbReference>
<dbReference type="Pfam" id="PF01795">
    <property type="entry name" value="Methyltransf_5"/>
    <property type="match status" value="1"/>
</dbReference>
<dbReference type="PIRSF" id="PIRSF004486">
    <property type="entry name" value="MraW"/>
    <property type="match status" value="1"/>
</dbReference>
<dbReference type="SUPFAM" id="SSF81799">
    <property type="entry name" value="Putative methyltransferase TM0872, insert domain"/>
    <property type="match status" value="1"/>
</dbReference>
<dbReference type="SUPFAM" id="SSF53335">
    <property type="entry name" value="S-adenosyl-L-methionine-dependent methyltransferases"/>
    <property type="match status" value="1"/>
</dbReference>
<reference key="1">
    <citation type="journal article" date="2003" name="Science">
        <title>A genomic view of the human-Bacteroides thetaiotaomicron symbiosis.</title>
        <authorList>
            <person name="Xu J."/>
            <person name="Bjursell M.K."/>
            <person name="Himrod J."/>
            <person name="Deng S."/>
            <person name="Carmichael L.K."/>
            <person name="Chiang H.C."/>
            <person name="Hooper L.V."/>
            <person name="Gordon J.I."/>
        </authorList>
    </citation>
    <scope>NUCLEOTIDE SEQUENCE [LARGE SCALE GENOMIC DNA]</scope>
    <source>
        <strain>ATCC 29148 / DSM 2079 / JCM 5827 / CCUG 10774 / NCTC 10582 / VPI-5482 / E50</strain>
    </source>
</reference>